<gene>
    <name type="ordered locus">MM_3016</name>
</gene>
<sequence>MDQPEDTDALVRFENITYSYPYSDSRVLSDVNLKLEKGEFVLLAGPSGCGKSTLVRCFNRLVPEISGGKLSGRVIIRGKDLREEKVHKLALEVGMVFQNPETQLFSLKVEDDLAFGPENLGLPGKEILSRVEKSLKAIKLEKLKDHFIFTLSGGEKQRTAIGGNLAMEPEILVLDEPTSDLDPSGTREVLDLLRRLNAEKRITLILIEHKLDEVFELADRMLVMDEGKVILDGKPFDILCREEGKLKKLGIHPPQIIEISRLLGFNCRTSSPPYENILKRLAELLMPSTRELQPESRKEAKPKIPPALCPEESLSHVRIEKLSCRREDGSETLKNVNLDIKYGEFLALLGHNGAGKTTLAGHLMRFHKPSSGRILLNGKNISKYSTAQLSQQIGYLFQNPDSQIFMNSVFEEVRFGLKNLKIPEEEMKKRVNSALEMMELSVYRNRHPQALSRGQRQRLAVASILALEPDLLVLDEPTTGQDRGHIHKFLDKIRELNRLGKTVILISHDMELVAEYAERVIVMKQGEVLLDGPAAEVFLSPEELDAAGLIPPLPARLALDLRKQGFDVPGMLTVSELKSFLRAHNVEIRD</sequence>
<comment type="function">
    <text evidence="1">Probably part of an ABC transporter complex. Responsible for energy coupling to the transport system (By similarity).</text>
</comment>
<comment type="subcellular location">
    <subcellularLocation>
        <location evidence="1">Cell membrane</location>
        <topology evidence="1">Peripheral membrane protein</topology>
    </subcellularLocation>
</comment>
<comment type="similarity">
    <text evidence="3">Belongs to the ABC transporter superfamily.</text>
</comment>
<dbReference type="EC" id="7.-.-.-"/>
<dbReference type="EMBL" id="AE008384">
    <property type="protein sequence ID" value="AAM32712.1"/>
    <property type="molecule type" value="Genomic_DNA"/>
</dbReference>
<dbReference type="RefSeq" id="WP_011034917.1">
    <property type="nucleotide sequence ID" value="NC_003901.1"/>
</dbReference>
<dbReference type="SMR" id="Q8PSR0"/>
<dbReference type="KEGG" id="mma:MM_3016"/>
<dbReference type="PATRIC" id="fig|192952.21.peg.3500"/>
<dbReference type="eggNOG" id="arCOG00188">
    <property type="taxonomic scope" value="Archaea"/>
</dbReference>
<dbReference type="HOGENOM" id="CLU_000604_86_7_2"/>
<dbReference type="Proteomes" id="UP000000595">
    <property type="component" value="Chromosome"/>
</dbReference>
<dbReference type="GO" id="GO:0043190">
    <property type="term" value="C:ATP-binding cassette (ABC) transporter complex"/>
    <property type="evidence" value="ECO:0007669"/>
    <property type="project" value="TreeGrafter"/>
</dbReference>
<dbReference type="GO" id="GO:0005524">
    <property type="term" value="F:ATP binding"/>
    <property type="evidence" value="ECO:0007669"/>
    <property type="project" value="UniProtKB-KW"/>
</dbReference>
<dbReference type="GO" id="GO:0016887">
    <property type="term" value="F:ATP hydrolysis activity"/>
    <property type="evidence" value="ECO:0007669"/>
    <property type="project" value="InterPro"/>
</dbReference>
<dbReference type="GO" id="GO:0042626">
    <property type="term" value="F:ATPase-coupled transmembrane transporter activity"/>
    <property type="evidence" value="ECO:0007669"/>
    <property type="project" value="TreeGrafter"/>
</dbReference>
<dbReference type="CDD" id="cd03225">
    <property type="entry name" value="ABC_cobalt_CbiO_domain1"/>
    <property type="match status" value="2"/>
</dbReference>
<dbReference type="FunFam" id="3.40.50.300:FF:000224">
    <property type="entry name" value="Energy-coupling factor transporter ATP-binding protein EcfA"/>
    <property type="match status" value="2"/>
</dbReference>
<dbReference type="Gene3D" id="3.40.50.300">
    <property type="entry name" value="P-loop containing nucleotide triphosphate hydrolases"/>
    <property type="match status" value="2"/>
</dbReference>
<dbReference type="InterPro" id="IPR003593">
    <property type="entry name" value="AAA+_ATPase"/>
</dbReference>
<dbReference type="InterPro" id="IPR003439">
    <property type="entry name" value="ABC_transporter-like_ATP-bd"/>
</dbReference>
<dbReference type="InterPro" id="IPR015856">
    <property type="entry name" value="ABC_transpr_CbiO/EcfA_su"/>
</dbReference>
<dbReference type="InterPro" id="IPR050095">
    <property type="entry name" value="ECF_ABC_transporter_ATP-bd"/>
</dbReference>
<dbReference type="InterPro" id="IPR027417">
    <property type="entry name" value="P-loop_NTPase"/>
</dbReference>
<dbReference type="NCBIfam" id="NF010167">
    <property type="entry name" value="PRK13648.1"/>
    <property type="match status" value="2"/>
</dbReference>
<dbReference type="PANTHER" id="PTHR43553:SF24">
    <property type="entry name" value="ENERGY-COUPLING FACTOR TRANSPORTER ATP-BINDING PROTEIN ECFA1"/>
    <property type="match status" value="1"/>
</dbReference>
<dbReference type="PANTHER" id="PTHR43553">
    <property type="entry name" value="HEAVY METAL TRANSPORTER"/>
    <property type="match status" value="1"/>
</dbReference>
<dbReference type="Pfam" id="PF00005">
    <property type="entry name" value="ABC_tran"/>
    <property type="match status" value="2"/>
</dbReference>
<dbReference type="SMART" id="SM00382">
    <property type="entry name" value="AAA"/>
    <property type="match status" value="2"/>
</dbReference>
<dbReference type="SUPFAM" id="SSF52540">
    <property type="entry name" value="P-loop containing nucleoside triphosphate hydrolases"/>
    <property type="match status" value="2"/>
</dbReference>
<dbReference type="PROSITE" id="PS50893">
    <property type="entry name" value="ABC_TRANSPORTER_2"/>
    <property type="match status" value="2"/>
</dbReference>
<organism>
    <name type="scientific">Methanosarcina mazei (strain ATCC BAA-159 / DSM 3647 / Goe1 / Go1 / JCM 11833 / OCM 88)</name>
    <name type="common">Methanosarcina frisia</name>
    <dbReference type="NCBI Taxonomy" id="192952"/>
    <lineage>
        <taxon>Archaea</taxon>
        <taxon>Methanobacteriati</taxon>
        <taxon>Methanobacteriota</taxon>
        <taxon>Stenosarchaea group</taxon>
        <taxon>Methanomicrobia</taxon>
        <taxon>Methanosarcinales</taxon>
        <taxon>Methanosarcinaceae</taxon>
        <taxon>Methanosarcina</taxon>
    </lineage>
</organism>
<evidence type="ECO:0000250" key="1"/>
<evidence type="ECO:0000255" key="2">
    <source>
        <dbReference type="PROSITE-ProRule" id="PRU00434"/>
    </source>
</evidence>
<evidence type="ECO:0000305" key="3"/>
<feature type="chain" id="PRO_0000092150" description="Putative ABC transporter ATP-binding protein MM_3016">
    <location>
        <begin position="1"/>
        <end position="590"/>
    </location>
</feature>
<feature type="domain" description="ABC transporter 1" evidence="2">
    <location>
        <begin position="11"/>
        <end position="251"/>
    </location>
</feature>
<feature type="domain" description="ABC transporter 2" evidence="2">
    <location>
        <begin position="317"/>
        <end position="550"/>
    </location>
</feature>
<feature type="binding site" evidence="2">
    <location>
        <begin position="45"/>
        <end position="52"/>
    </location>
    <ligand>
        <name>ATP</name>
        <dbReference type="ChEBI" id="CHEBI:30616"/>
        <label>1</label>
    </ligand>
</feature>
<feature type="binding site" evidence="2">
    <location>
        <begin position="350"/>
        <end position="357"/>
    </location>
    <ligand>
        <name>ATP</name>
        <dbReference type="ChEBI" id="CHEBI:30616"/>
        <label>2</label>
    </ligand>
</feature>
<reference key="1">
    <citation type="journal article" date="2002" name="J. Mol. Microbiol. Biotechnol.">
        <title>The genome of Methanosarcina mazei: evidence for lateral gene transfer between Bacteria and Archaea.</title>
        <authorList>
            <person name="Deppenmeier U."/>
            <person name="Johann A."/>
            <person name="Hartsch T."/>
            <person name="Merkl R."/>
            <person name="Schmitz R.A."/>
            <person name="Martinez-Arias R."/>
            <person name="Henne A."/>
            <person name="Wiezer A."/>
            <person name="Baeumer S."/>
            <person name="Jacobi C."/>
            <person name="Brueggemann H."/>
            <person name="Lienard T."/>
            <person name="Christmann A."/>
            <person name="Boemecke M."/>
            <person name="Steckel S."/>
            <person name="Bhattacharyya A."/>
            <person name="Lykidis A."/>
            <person name="Overbeek R."/>
            <person name="Klenk H.-P."/>
            <person name="Gunsalus R.P."/>
            <person name="Fritz H.-J."/>
            <person name="Gottschalk G."/>
        </authorList>
    </citation>
    <scope>NUCLEOTIDE SEQUENCE [LARGE SCALE GENOMIC DNA]</scope>
    <source>
        <strain>ATCC BAA-159 / DSM 3647 / Goe1 / Go1 / JCM 11833 / OCM 88</strain>
    </source>
</reference>
<accession>Q8PSR0</accession>
<name>Y3016_METMA</name>
<protein>
    <recommendedName>
        <fullName>Putative ABC transporter ATP-binding protein MM_3016</fullName>
        <ecNumber>7.-.-.-</ecNumber>
    </recommendedName>
</protein>
<proteinExistence type="inferred from homology"/>
<keyword id="KW-0067">ATP-binding</keyword>
<keyword id="KW-1003">Cell membrane</keyword>
<keyword id="KW-0472">Membrane</keyword>
<keyword id="KW-0547">Nucleotide-binding</keyword>
<keyword id="KW-0677">Repeat</keyword>
<keyword id="KW-1278">Translocase</keyword>
<keyword id="KW-0813">Transport</keyword>